<evidence type="ECO:0000255" key="1">
    <source>
        <dbReference type="HAMAP-Rule" id="MF_00001"/>
    </source>
</evidence>
<name>PYRB_LATSS</name>
<proteinExistence type="inferred from homology"/>
<sequence>MTNQTAIVSVEQLTNSSVLNLIERAEAFKQGATCELTRPVYAMNLFFENSTRTKTSFEMAERKLGLSVMSFEAETSSVSKGETLSDTLKTVQAIGVDFVAVRHPQNYYYDDLLADPAFHLALANGGDGSGQHPSQCLLDMMTIHEEFGHFDGLKVVICGDLRHSRVAKSNMQLLKRLGAQLYFAGPEEWFTAEFNDYGQHVALDSILDQVDVVMLLRIQHERFDSAETMTDEAFHVKYGLTAQRAAQLKASTIWLHPAPVNRDVEIADELVEAPQSRIFKQMHNGVFMRMAMIEYLLKQKNLIKD</sequence>
<organism>
    <name type="scientific">Latilactobacillus sakei subsp. sakei (strain 23K)</name>
    <name type="common">Lactobacillus sakei subsp. sakei</name>
    <dbReference type="NCBI Taxonomy" id="314315"/>
    <lineage>
        <taxon>Bacteria</taxon>
        <taxon>Bacillati</taxon>
        <taxon>Bacillota</taxon>
        <taxon>Bacilli</taxon>
        <taxon>Lactobacillales</taxon>
        <taxon>Lactobacillaceae</taxon>
        <taxon>Latilactobacillus</taxon>
    </lineage>
</organism>
<dbReference type="EC" id="2.1.3.2" evidence="1"/>
<dbReference type="EMBL" id="CR936503">
    <property type="protein sequence ID" value="CAI55254.1"/>
    <property type="molecule type" value="Genomic_DNA"/>
</dbReference>
<dbReference type="RefSeq" id="WP_011374654.1">
    <property type="nucleotide sequence ID" value="NC_007576.1"/>
</dbReference>
<dbReference type="SMR" id="Q38X27"/>
<dbReference type="STRING" id="314315.LCA_0952"/>
<dbReference type="KEGG" id="lsa:LCA_0952"/>
<dbReference type="eggNOG" id="COG0540">
    <property type="taxonomic scope" value="Bacteria"/>
</dbReference>
<dbReference type="HOGENOM" id="CLU_043846_2_1_9"/>
<dbReference type="OrthoDB" id="9774690at2"/>
<dbReference type="UniPathway" id="UPA00070">
    <property type="reaction ID" value="UER00116"/>
</dbReference>
<dbReference type="Proteomes" id="UP000002707">
    <property type="component" value="Chromosome"/>
</dbReference>
<dbReference type="GO" id="GO:0005829">
    <property type="term" value="C:cytosol"/>
    <property type="evidence" value="ECO:0007669"/>
    <property type="project" value="TreeGrafter"/>
</dbReference>
<dbReference type="GO" id="GO:0016597">
    <property type="term" value="F:amino acid binding"/>
    <property type="evidence" value="ECO:0007669"/>
    <property type="project" value="InterPro"/>
</dbReference>
<dbReference type="GO" id="GO:0004070">
    <property type="term" value="F:aspartate carbamoyltransferase activity"/>
    <property type="evidence" value="ECO:0007669"/>
    <property type="project" value="UniProtKB-UniRule"/>
</dbReference>
<dbReference type="GO" id="GO:0006207">
    <property type="term" value="P:'de novo' pyrimidine nucleobase biosynthetic process"/>
    <property type="evidence" value="ECO:0007669"/>
    <property type="project" value="InterPro"/>
</dbReference>
<dbReference type="GO" id="GO:0044205">
    <property type="term" value="P:'de novo' UMP biosynthetic process"/>
    <property type="evidence" value="ECO:0007669"/>
    <property type="project" value="UniProtKB-UniRule"/>
</dbReference>
<dbReference type="GO" id="GO:0006520">
    <property type="term" value="P:amino acid metabolic process"/>
    <property type="evidence" value="ECO:0007669"/>
    <property type="project" value="InterPro"/>
</dbReference>
<dbReference type="FunFam" id="3.40.50.1370:FF:000011">
    <property type="entry name" value="Aspartate carbamoyltransferase"/>
    <property type="match status" value="1"/>
</dbReference>
<dbReference type="Gene3D" id="3.40.50.1370">
    <property type="entry name" value="Aspartate/ornithine carbamoyltransferase"/>
    <property type="match status" value="2"/>
</dbReference>
<dbReference type="HAMAP" id="MF_00001">
    <property type="entry name" value="Asp_carb_tr"/>
    <property type="match status" value="1"/>
</dbReference>
<dbReference type="InterPro" id="IPR006132">
    <property type="entry name" value="Asp/Orn_carbamoyltranf_P-bd"/>
</dbReference>
<dbReference type="InterPro" id="IPR006130">
    <property type="entry name" value="Asp/Orn_carbamoylTrfase"/>
</dbReference>
<dbReference type="InterPro" id="IPR036901">
    <property type="entry name" value="Asp/Orn_carbamoylTrfase_sf"/>
</dbReference>
<dbReference type="InterPro" id="IPR002082">
    <property type="entry name" value="Asp_carbamoyltransf"/>
</dbReference>
<dbReference type="InterPro" id="IPR006131">
    <property type="entry name" value="Asp_carbamoyltransf_Asp/Orn-bd"/>
</dbReference>
<dbReference type="NCBIfam" id="TIGR00670">
    <property type="entry name" value="asp_carb_tr"/>
    <property type="match status" value="1"/>
</dbReference>
<dbReference type="NCBIfam" id="NF002032">
    <property type="entry name" value="PRK00856.1"/>
    <property type="match status" value="1"/>
</dbReference>
<dbReference type="PANTHER" id="PTHR45753:SF6">
    <property type="entry name" value="ASPARTATE CARBAMOYLTRANSFERASE"/>
    <property type="match status" value="1"/>
</dbReference>
<dbReference type="PANTHER" id="PTHR45753">
    <property type="entry name" value="ORNITHINE CARBAMOYLTRANSFERASE, MITOCHONDRIAL"/>
    <property type="match status" value="1"/>
</dbReference>
<dbReference type="Pfam" id="PF00185">
    <property type="entry name" value="OTCace"/>
    <property type="match status" value="1"/>
</dbReference>
<dbReference type="Pfam" id="PF02729">
    <property type="entry name" value="OTCace_N"/>
    <property type="match status" value="1"/>
</dbReference>
<dbReference type="PRINTS" id="PR00100">
    <property type="entry name" value="AOTCASE"/>
</dbReference>
<dbReference type="PRINTS" id="PR00101">
    <property type="entry name" value="ATCASE"/>
</dbReference>
<dbReference type="SUPFAM" id="SSF53671">
    <property type="entry name" value="Aspartate/ornithine carbamoyltransferase"/>
    <property type="match status" value="1"/>
</dbReference>
<dbReference type="PROSITE" id="PS00097">
    <property type="entry name" value="CARBAMOYLTRANSFERASE"/>
    <property type="match status" value="1"/>
</dbReference>
<protein>
    <recommendedName>
        <fullName evidence="1">Aspartate carbamoyltransferase catalytic subunit</fullName>
        <ecNumber evidence="1">2.1.3.2</ecNumber>
    </recommendedName>
    <alternativeName>
        <fullName evidence="1">Aspartate transcarbamylase</fullName>
        <shortName evidence="1">ATCase</shortName>
    </alternativeName>
</protein>
<reference key="1">
    <citation type="journal article" date="2005" name="Nat. Biotechnol.">
        <title>The complete genome sequence of the meat-borne lactic acid bacterium Lactobacillus sakei 23K.</title>
        <authorList>
            <person name="Chaillou S."/>
            <person name="Champomier-Verges M.-C."/>
            <person name="Cornet M."/>
            <person name="Crutz-Le Coq A.-M."/>
            <person name="Dudez A.-M."/>
            <person name="Martin V."/>
            <person name="Beaufils S."/>
            <person name="Darbon-Rongere E."/>
            <person name="Bossy R."/>
            <person name="Loux V."/>
            <person name="Zagorec M."/>
        </authorList>
    </citation>
    <scope>NUCLEOTIDE SEQUENCE [LARGE SCALE GENOMIC DNA]</scope>
    <source>
        <strain>23K</strain>
    </source>
</reference>
<accession>Q38X27</accession>
<comment type="function">
    <text evidence="1">Catalyzes the condensation of carbamoyl phosphate and aspartate to form carbamoyl aspartate and inorganic phosphate, the committed step in the de novo pyrimidine nucleotide biosynthesis pathway.</text>
</comment>
<comment type="catalytic activity">
    <reaction evidence="1">
        <text>carbamoyl phosphate + L-aspartate = N-carbamoyl-L-aspartate + phosphate + H(+)</text>
        <dbReference type="Rhea" id="RHEA:20013"/>
        <dbReference type="ChEBI" id="CHEBI:15378"/>
        <dbReference type="ChEBI" id="CHEBI:29991"/>
        <dbReference type="ChEBI" id="CHEBI:32814"/>
        <dbReference type="ChEBI" id="CHEBI:43474"/>
        <dbReference type="ChEBI" id="CHEBI:58228"/>
        <dbReference type="EC" id="2.1.3.2"/>
    </reaction>
</comment>
<comment type="pathway">
    <text evidence="1">Pyrimidine metabolism; UMP biosynthesis via de novo pathway; (S)-dihydroorotate from bicarbonate: step 2/3.</text>
</comment>
<comment type="subunit">
    <text evidence="1">Heterododecamer (2C3:3R2) of six catalytic PyrB chains organized as two trimers (C3), and six regulatory PyrI chains organized as three dimers (R2).</text>
</comment>
<comment type="similarity">
    <text evidence="1">Belongs to the aspartate/ornithine carbamoyltransferase superfamily. ATCase family.</text>
</comment>
<keyword id="KW-0665">Pyrimidine biosynthesis</keyword>
<keyword id="KW-1185">Reference proteome</keyword>
<keyword id="KW-0808">Transferase</keyword>
<gene>
    <name evidence="1" type="primary">pyrB</name>
    <name type="ordered locus">LCA_0952</name>
</gene>
<feature type="chain" id="PRO_0000321112" description="Aspartate carbamoyltransferase catalytic subunit">
    <location>
        <begin position="1"/>
        <end position="305"/>
    </location>
</feature>
<feature type="binding site" evidence="1">
    <location>
        <position position="52"/>
    </location>
    <ligand>
        <name>carbamoyl phosphate</name>
        <dbReference type="ChEBI" id="CHEBI:58228"/>
    </ligand>
</feature>
<feature type="binding site" evidence="1">
    <location>
        <position position="53"/>
    </location>
    <ligand>
        <name>carbamoyl phosphate</name>
        <dbReference type="ChEBI" id="CHEBI:58228"/>
    </ligand>
</feature>
<feature type="binding site" evidence="1">
    <location>
        <position position="80"/>
    </location>
    <ligand>
        <name>L-aspartate</name>
        <dbReference type="ChEBI" id="CHEBI:29991"/>
    </ligand>
</feature>
<feature type="binding site" evidence="1">
    <location>
        <position position="102"/>
    </location>
    <ligand>
        <name>carbamoyl phosphate</name>
        <dbReference type="ChEBI" id="CHEBI:58228"/>
    </ligand>
</feature>
<feature type="binding site" evidence="1">
    <location>
        <position position="132"/>
    </location>
    <ligand>
        <name>carbamoyl phosphate</name>
        <dbReference type="ChEBI" id="CHEBI:58228"/>
    </ligand>
</feature>
<feature type="binding site" evidence="1">
    <location>
        <position position="135"/>
    </location>
    <ligand>
        <name>carbamoyl phosphate</name>
        <dbReference type="ChEBI" id="CHEBI:58228"/>
    </ligand>
</feature>
<feature type="binding site" evidence="1">
    <location>
        <position position="165"/>
    </location>
    <ligand>
        <name>L-aspartate</name>
        <dbReference type="ChEBI" id="CHEBI:29991"/>
    </ligand>
</feature>
<feature type="binding site" evidence="1">
    <location>
        <position position="217"/>
    </location>
    <ligand>
        <name>L-aspartate</name>
        <dbReference type="ChEBI" id="CHEBI:29991"/>
    </ligand>
</feature>
<feature type="binding site" evidence="1">
    <location>
        <position position="258"/>
    </location>
    <ligand>
        <name>carbamoyl phosphate</name>
        <dbReference type="ChEBI" id="CHEBI:58228"/>
    </ligand>
</feature>
<feature type="binding site" evidence="1">
    <location>
        <position position="259"/>
    </location>
    <ligand>
        <name>carbamoyl phosphate</name>
        <dbReference type="ChEBI" id="CHEBI:58228"/>
    </ligand>
</feature>